<organism>
    <name type="scientific">Brevibacillus brevis</name>
    <name type="common">Bacillus brevis</name>
    <dbReference type="NCBI Taxonomy" id="1393"/>
    <lineage>
        <taxon>Bacteria</taxon>
        <taxon>Bacillati</taxon>
        <taxon>Bacillota</taxon>
        <taxon>Bacilli</taxon>
        <taxon>Bacillales</taxon>
        <taxon>Paenibacillaceae</taxon>
        <taxon>Brevibacillus</taxon>
    </lineage>
</organism>
<dbReference type="EMBL" id="AF064059">
    <property type="protein sequence ID" value="AAC18580.1"/>
    <property type="molecule type" value="Genomic_DNA"/>
</dbReference>
<dbReference type="SMR" id="O69103"/>
<dbReference type="eggNOG" id="COG0755">
    <property type="taxonomic scope" value="Bacteria"/>
</dbReference>
<dbReference type="GO" id="GO:0005886">
    <property type="term" value="C:plasma membrane"/>
    <property type="evidence" value="ECO:0007669"/>
    <property type="project" value="UniProtKB-SubCell"/>
</dbReference>
<dbReference type="GO" id="GO:0020037">
    <property type="term" value="F:heme binding"/>
    <property type="evidence" value="ECO:0007669"/>
    <property type="project" value="InterPro"/>
</dbReference>
<dbReference type="GO" id="GO:0017004">
    <property type="term" value="P:cytochrome complex assembly"/>
    <property type="evidence" value="ECO:0007669"/>
    <property type="project" value="InterPro"/>
</dbReference>
<dbReference type="GO" id="GO:0006779">
    <property type="term" value="P:porphyrin-containing compound biosynthetic process"/>
    <property type="evidence" value="ECO:0007669"/>
    <property type="project" value="UniProtKB-KW"/>
</dbReference>
<dbReference type="InterPro" id="IPR002541">
    <property type="entry name" value="Cyt_c_assembly"/>
</dbReference>
<dbReference type="InterPro" id="IPR052372">
    <property type="entry name" value="YpjD/HemX"/>
</dbReference>
<dbReference type="PANTHER" id="PTHR38034">
    <property type="entry name" value="INNER MEMBRANE PROTEIN YPJD"/>
    <property type="match status" value="1"/>
</dbReference>
<dbReference type="PANTHER" id="PTHR38034:SF1">
    <property type="entry name" value="INNER MEMBRANE PROTEIN YPJD"/>
    <property type="match status" value="1"/>
</dbReference>
<dbReference type="Pfam" id="PF01578">
    <property type="entry name" value="Cytochrom_C_asm"/>
    <property type="match status" value="1"/>
</dbReference>
<reference key="1">
    <citation type="journal article" date="1999" name="Microbiology">
        <title>Organization of genes for tetrapyrrole biosynthesis in Gram-positive bacteria.</title>
        <authorList>
            <person name="Johansson P."/>
            <person name="Hederstedt L."/>
        </authorList>
    </citation>
    <scope>NUCLEOTIDE SEQUENCE [GENOMIC DNA]</scope>
    <source>
        <strain>ATCC 8246 / DSM 30 / JCM 2503 / NCIB 9372 / NCTC 2611</strain>
    </source>
</reference>
<proteinExistence type="inferred from homology"/>
<feature type="chain" id="PRO_0000083950" description="Protein HemX">
    <location>
        <begin position="1"/>
        <end position="272"/>
    </location>
</feature>
<feature type="transmembrane region" description="Helical" evidence="2">
    <location>
        <begin position="7"/>
        <end position="27"/>
    </location>
</feature>
<feature type="transmembrane region" description="Helical" evidence="2">
    <location>
        <begin position="38"/>
        <end position="58"/>
    </location>
</feature>
<feature type="transmembrane region" description="Helical" evidence="2">
    <location>
        <begin position="65"/>
        <end position="85"/>
    </location>
</feature>
<feature type="transmembrane region" description="Helical" evidence="2">
    <location>
        <begin position="93"/>
        <end position="113"/>
    </location>
</feature>
<feature type="transmembrane region" description="Helical" evidence="2">
    <location>
        <begin position="135"/>
        <end position="155"/>
    </location>
</feature>
<feature type="transmembrane region" description="Helical" evidence="2">
    <location>
        <begin position="188"/>
        <end position="208"/>
    </location>
</feature>
<feature type="transmembrane region" description="Helical" evidence="2">
    <location>
        <begin position="212"/>
        <end position="232"/>
    </location>
</feature>
<feature type="transmembrane region" description="Helical" evidence="2">
    <location>
        <begin position="248"/>
        <end position="268"/>
    </location>
</feature>
<name>HEMX_BREBE</name>
<keyword id="KW-1003">Cell membrane</keyword>
<keyword id="KW-0472">Membrane</keyword>
<keyword id="KW-0627">Porphyrin biosynthesis</keyword>
<keyword id="KW-0812">Transmembrane</keyword>
<keyword id="KW-1133">Transmembrane helix</keyword>
<protein>
    <recommendedName>
        <fullName>Protein HemX</fullName>
    </recommendedName>
</protein>
<evidence type="ECO:0000250" key="1"/>
<evidence type="ECO:0000255" key="2"/>
<evidence type="ECO:0000305" key="3"/>
<sequence length="272" mass="31643">MAEVRWIYDLTIFLYAASVLFYFNDFLQSNRKVNRLAFGLLVVVWALQTAFFVSQAVMKGYFPVITLFETLFFYSWVLVGLSLAIHYFFRIDLLVFLPNIIGFVVLVMSMFLPETPIEAVSSILTSELLLTHVTLAMFSYGAFSLSMIFSAMYLLQHKMLKGRRWSPLLRRLPSLDQLEGYAYRMNMLGVPMLLLSIVLGIIWGKMVLGEKFLLDSKVLLSELVLAIYSLWLYQRYRIRCRCADSSQWNVLAFLLLLINFLGFTTSTFHDWW</sequence>
<comment type="function">
    <text evidence="1">Required for HemL synthesis.</text>
</comment>
<comment type="subcellular location">
    <subcellularLocation>
        <location evidence="3">Cell membrane</location>
        <topology evidence="3">Multi-pass membrane protein</topology>
    </subcellularLocation>
</comment>
<gene>
    <name type="primary">hemX</name>
</gene>
<accession>O69103</accession>